<organism>
    <name type="scientific">Salmonella agona (strain SL483)</name>
    <dbReference type="NCBI Taxonomy" id="454166"/>
    <lineage>
        <taxon>Bacteria</taxon>
        <taxon>Pseudomonadati</taxon>
        <taxon>Pseudomonadota</taxon>
        <taxon>Gammaproteobacteria</taxon>
        <taxon>Enterobacterales</taxon>
        <taxon>Enterobacteriaceae</taxon>
        <taxon>Salmonella</taxon>
    </lineage>
</organism>
<gene>
    <name evidence="1" type="primary">allA</name>
    <name type="ordered locus">SeAg_B0562</name>
</gene>
<protein>
    <recommendedName>
        <fullName evidence="1">Ureidoglycolate lyase</fullName>
        <ecNumber evidence="1">4.3.2.3</ecNumber>
    </recommendedName>
    <alternativeName>
        <fullName evidence="1">Ureidoglycolatase</fullName>
    </alternativeName>
</protein>
<name>ALLA_SALA4</name>
<proteinExistence type="inferred from homology"/>
<comment type="function">
    <text evidence="1">Catalyzes the catabolism of the allantoin degradation intermediate (S)-ureidoglycolate, generating urea and glyoxylate. Involved in the utilization of allantoin as nitrogen source.</text>
</comment>
<comment type="catalytic activity">
    <reaction evidence="1">
        <text>(S)-ureidoglycolate = urea + glyoxylate</text>
        <dbReference type="Rhea" id="RHEA:11304"/>
        <dbReference type="ChEBI" id="CHEBI:16199"/>
        <dbReference type="ChEBI" id="CHEBI:36655"/>
        <dbReference type="ChEBI" id="CHEBI:57296"/>
        <dbReference type="EC" id="4.3.2.3"/>
    </reaction>
</comment>
<comment type="cofactor">
    <cofactor evidence="1">
        <name>Ni(2+)</name>
        <dbReference type="ChEBI" id="CHEBI:49786"/>
    </cofactor>
</comment>
<comment type="pathway">
    <text evidence="1">Nitrogen metabolism; (S)-allantoin degradation.</text>
</comment>
<comment type="subunit">
    <text evidence="1">Homodimer.</text>
</comment>
<comment type="similarity">
    <text evidence="1">Belongs to the ureidoglycolate lyase family.</text>
</comment>
<keyword id="KW-0456">Lyase</keyword>
<keyword id="KW-0659">Purine metabolism</keyword>
<feature type="chain" id="PRO_1000130422" description="Ureidoglycolate lyase">
    <location>
        <begin position="1"/>
        <end position="160"/>
    </location>
</feature>
<reference key="1">
    <citation type="journal article" date="2011" name="J. Bacteriol.">
        <title>Comparative genomics of 28 Salmonella enterica isolates: evidence for CRISPR-mediated adaptive sublineage evolution.</title>
        <authorList>
            <person name="Fricke W.F."/>
            <person name="Mammel M.K."/>
            <person name="McDermott P.F."/>
            <person name="Tartera C."/>
            <person name="White D.G."/>
            <person name="Leclerc J.E."/>
            <person name="Ravel J."/>
            <person name="Cebula T.A."/>
        </authorList>
    </citation>
    <scope>NUCLEOTIDE SEQUENCE [LARGE SCALE GENOMIC DNA]</scope>
    <source>
        <strain>SL483</strain>
    </source>
</reference>
<sequence length="160" mass="18124">MKLEVLPLDQKTFSAYGDVIETQERDFFHINNGLVERYHDLAKVEVLEQDRTLISINRAQPAAMPIVVHELERHPLGTQAFVPMNGEAFVVIVALGDDKPDLSTLRAFISNGRQGVNYHRNVWHHPLFAWQTVTDFLTVDRGGSDNCDVESIPTHELCFA</sequence>
<evidence type="ECO:0000255" key="1">
    <source>
        <dbReference type="HAMAP-Rule" id="MF_00616"/>
    </source>
</evidence>
<dbReference type="EC" id="4.3.2.3" evidence="1"/>
<dbReference type="EMBL" id="CP001138">
    <property type="protein sequence ID" value="ACH52907.1"/>
    <property type="molecule type" value="Genomic_DNA"/>
</dbReference>
<dbReference type="RefSeq" id="WP_000764659.1">
    <property type="nucleotide sequence ID" value="NC_011149.1"/>
</dbReference>
<dbReference type="SMR" id="B5EYB6"/>
<dbReference type="KEGG" id="sea:SeAg_B0562"/>
<dbReference type="HOGENOM" id="CLU_070848_1_1_6"/>
<dbReference type="UniPathway" id="UPA00395"/>
<dbReference type="Proteomes" id="UP000008819">
    <property type="component" value="Chromosome"/>
</dbReference>
<dbReference type="GO" id="GO:0004848">
    <property type="term" value="F:ureidoglycolate hydrolase activity"/>
    <property type="evidence" value="ECO:0007669"/>
    <property type="project" value="InterPro"/>
</dbReference>
<dbReference type="GO" id="GO:0050385">
    <property type="term" value="F:ureidoglycolate lyase activity"/>
    <property type="evidence" value="ECO:0007669"/>
    <property type="project" value="UniProtKB-UniRule"/>
</dbReference>
<dbReference type="GO" id="GO:0000256">
    <property type="term" value="P:allantoin catabolic process"/>
    <property type="evidence" value="ECO:0007669"/>
    <property type="project" value="UniProtKB-UniRule"/>
</dbReference>
<dbReference type="GO" id="GO:0006145">
    <property type="term" value="P:purine nucleobase catabolic process"/>
    <property type="evidence" value="ECO:0007669"/>
    <property type="project" value="UniProtKB-UniRule"/>
</dbReference>
<dbReference type="CDD" id="cd20298">
    <property type="entry name" value="cupin_UAH"/>
    <property type="match status" value="1"/>
</dbReference>
<dbReference type="FunFam" id="2.60.120.480:FF:000001">
    <property type="entry name" value="Ureidoglycolate lyase"/>
    <property type="match status" value="1"/>
</dbReference>
<dbReference type="Gene3D" id="2.60.120.480">
    <property type="entry name" value="Ureidoglycolate hydrolase"/>
    <property type="match status" value="1"/>
</dbReference>
<dbReference type="HAMAP" id="MF_00616">
    <property type="entry name" value="Ureidogly_lyase"/>
    <property type="match status" value="1"/>
</dbReference>
<dbReference type="InterPro" id="IPR011051">
    <property type="entry name" value="RmlC_Cupin_sf"/>
</dbReference>
<dbReference type="InterPro" id="IPR047233">
    <property type="entry name" value="UAH_cupin"/>
</dbReference>
<dbReference type="InterPro" id="IPR007247">
    <property type="entry name" value="Ureidogly_lyase"/>
</dbReference>
<dbReference type="InterPro" id="IPR023525">
    <property type="entry name" value="Ureidogly_lyase_bac"/>
</dbReference>
<dbReference type="InterPro" id="IPR024060">
    <property type="entry name" value="Ureidoglycolate_lyase_dom_sf"/>
</dbReference>
<dbReference type="NCBIfam" id="NF002948">
    <property type="entry name" value="PRK03606.1-1"/>
    <property type="match status" value="1"/>
</dbReference>
<dbReference type="NCBIfam" id="NF009932">
    <property type="entry name" value="PRK13395.1"/>
    <property type="match status" value="1"/>
</dbReference>
<dbReference type="PANTHER" id="PTHR21221">
    <property type="entry name" value="UREIDOGLYCOLATE HYDROLASE"/>
    <property type="match status" value="1"/>
</dbReference>
<dbReference type="PANTHER" id="PTHR21221:SF1">
    <property type="entry name" value="UREIDOGLYCOLATE LYASE"/>
    <property type="match status" value="1"/>
</dbReference>
<dbReference type="Pfam" id="PF04115">
    <property type="entry name" value="Ureidogly_lyase"/>
    <property type="match status" value="1"/>
</dbReference>
<dbReference type="PIRSF" id="PIRSF017306">
    <property type="entry name" value="Ureidogly_hydro"/>
    <property type="match status" value="1"/>
</dbReference>
<dbReference type="SUPFAM" id="SSF51182">
    <property type="entry name" value="RmlC-like cupins"/>
    <property type="match status" value="1"/>
</dbReference>
<accession>B5EYB6</accession>